<organism>
    <name type="scientific">Thermotoga petrophila (strain ATCC BAA-488 / DSM 13995 / JCM 10881 / RKU-1)</name>
    <dbReference type="NCBI Taxonomy" id="390874"/>
    <lineage>
        <taxon>Bacteria</taxon>
        <taxon>Thermotogati</taxon>
        <taxon>Thermotogota</taxon>
        <taxon>Thermotogae</taxon>
        <taxon>Thermotogales</taxon>
        <taxon>Thermotogaceae</taxon>
        <taxon>Thermotoga</taxon>
    </lineage>
</organism>
<name>METK_THEP1</name>
<gene>
    <name evidence="1" type="primary">metK</name>
    <name type="ordered locus">Tpet_1133</name>
</gene>
<reference key="1">
    <citation type="submission" date="2007-05" db="EMBL/GenBank/DDBJ databases">
        <title>Complete sequence of Thermotoga petrophila RKU-1.</title>
        <authorList>
            <consortium name="US DOE Joint Genome Institute"/>
            <person name="Copeland A."/>
            <person name="Lucas S."/>
            <person name="Lapidus A."/>
            <person name="Barry K."/>
            <person name="Glavina del Rio T."/>
            <person name="Dalin E."/>
            <person name="Tice H."/>
            <person name="Pitluck S."/>
            <person name="Sims D."/>
            <person name="Brettin T."/>
            <person name="Bruce D."/>
            <person name="Detter J.C."/>
            <person name="Han C."/>
            <person name="Tapia R."/>
            <person name="Schmutz J."/>
            <person name="Larimer F."/>
            <person name="Land M."/>
            <person name="Hauser L."/>
            <person name="Kyrpides N."/>
            <person name="Mikhailova N."/>
            <person name="Nelson K."/>
            <person name="Gogarten J.P."/>
            <person name="Noll K."/>
            <person name="Richardson P."/>
        </authorList>
    </citation>
    <scope>NUCLEOTIDE SEQUENCE [LARGE SCALE GENOMIC DNA]</scope>
    <source>
        <strain>ATCC BAA-488 / DSM 13995 / JCM 10881 / RKU-1</strain>
    </source>
</reference>
<evidence type="ECO:0000255" key="1">
    <source>
        <dbReference type="HAMAP-Rule" id="MF_00086"/>
    </source>
</evidence>
<dbReference type="EC" id="2.5.1.6" evidence="1"/>
<dbReference type="EMBL" id="CP000702">
    <property type="protein sequence ID" value="ABQ47147.1"/>
    <property type="molecule type" value="Genomic_DNA"/>
</dbReference>
<dbReference type="RefSeq" id="WP_004082170.1">
    <property type="nucleotide sequence ID" value="NC_009486.1"/>
</dbReference>
<dbReference type="SMR" id="A5ILS4"/>
<dbReference type="STRING" id="390874.Tpet_1133"/>
<dbReference type="KEGG" id="tpt:Tpet_1133"/>
<dbReference type="eggNOG" id="COG0192">
    <property type="taxonomic scope" value="Bacteria"/>
</dbReference>
<dbReference type="HOGENOM" id="CLU_041802_1_1_0"/>
<dbReference type="UniPathway" id="UPA00315">
    <property type="reaction ID" value="UER00080"/>
</dbReference>
<dbReference type="Proteomes" id="UP000006558">
    <property type="component" value="Chromosome"/>
</dbReference>
<dbReference type="GO" id="GO:0005737">
    <property type="term" value="C:cytoplasm"/>
    <property type="evidence" value="ECO:0007669"/>
    <property type="project" value="UniProtKB-SubCell"/>
</dbReference>
<dbReference type="GO" id="GO:0005524">
    <property type="term" value="F:ATP binding"/>
    <property type="evidence" value="ECO:0007669"/>
    <property type="project" value="UniProtKB-UniRule"/>
</dbReference>
<dbReference type="GO" id="GO:0000287">
    <property type="term" value="F:magnesium ion binding"/>
    <property type="evidence" value="ECO:0007669"/>
    <property type="project" value="UniProtKB-UniRule"/>
</dbReference>
<dbReference type="GO" id="GO:0004478">
    <property type="term" value="F:methionine adenosyltransferase activity"/>
    <property type="evidence" value="ECO:0007669"/>
    <property type="project" value="UniProtKB-UniRule"/>
</dbReference>
<dbReference type="GO" id="GO:0006730">
    <property type="term" value="P:one-carbon metabolic process"/>
    <property type="evidence" value="ECO:0007669"/>
    <property type="project" value="UniProtKB-KW"/>
</dbReference>
<dbReference type="GO" id="GO:0006556">
    <property type="term" value="P:S-adenosylmethionine biosynthetic process"/>
    <property type="evidence" value="ECO:0007669"/>
    <property type="project" value="UniProtKB-UniRule"/>
</dbReference>
<dbReference type="CDD" id="cd18079">
    <property type="entry name" value="S-AdoMet_synt"/>
    <property type="match status" value="1"/>
</dbReference>
<dbReference type="FunFam" id="3.30.300.10:FF:000003">
    <property type="entry name" value="S-adenosylmethionine synthase"/>
    <property type="match status" value="1"/>
</dbReference>
<dbReference type="FunFam" id="3.30.300.10:FF:000004">
    <property type="entry name" value="S-adenosylmethionine synthase"/>
    <property type="match status" value="1"/>
</dbReference>
<dbReference type="Gene3D" id="3.30.300.10">
    <property type="match status" value="3"/>
</dbReference>
<dbReference type="HAMAP" id="MF_00086">
    <property type="entry name" value="S_AdoMet_synth1"/>
    <property type="match status" value="1"/>
</dbReference>
<dbReference type="InterPro" id="IPR022631">
    <property type="entry name" value="ADOMET_SYNTHASE_CS"/>
</dbReference>
<dbReference type="InterPro" id="IPR022630">
    <property type="entry name" value="S-AdoMet_synt_C"/>
</dbReference>
<dbReference type="InterPro" id="IPR022629">
    <property type="entry name" value="S-AdoMet_synt_central"/>
</dbReference>
<dbReference type="InterPro" id="IPR022628">
    <property type="entry name" value="S-AdoMet_synt_N"/>
</dbReference>
<dbReference type="InterPro" id="IPR002133">
    <property type="entry name" value="S-AdoMet_synthetase"/>
</dbReference>
<dbReference type="InterPro" id="IPR022636">
    <property type="entry name" value="S-AdoMet_synthetase_sfam"/>
</dbReference>
<dbReference type="NCBIfam" id="TIGR01034">
    <property type="entry name" value="metK"/>
    <property type="match status" value="1"/>
</dbReference>
<dbReference type="PANTHER" id="PTHR11964">
    <property type="entry name" value="S-ADENOSYLMETHIONINE SYNTHETASE"/>
    <property type="match status" value="1"/>
</dbReference>
<dbReference type="Pfam" id="PF02773">
    <property type="entry name" value="S-AdoMet_synt_C"/>
    <property type="match status" value="1"/>
</dbReference>
<dbReference type="Pfam" id="PF02772">
    <property type="entry name" value="S-AdoMet_synt_M"/>
    <property type="match status" value="1"/>
</dbReference>
<dbReference type="Pfam" id="PF00438">
    <property type="entry name" value="S-AdoMet_synt_N"/>
    <property type="match status" value="1"/>
</dbReference>
<dbReference type="PIRSF" id="PIRSF000497">
    <property type="entry name" value="MAT"/>
    <property type="match status" value="1"/>
</dbReference>
<dbReference type="SUPFAM" id="SSF55973">
    <property type="entry name" value="S-adenosylmethionine synthetase"/>
    <property type="match status" value="3"/>
</dbReference>
<dbReference type="PROSITE" id="PS00376">
    <property type="entry name" value="ADOMET_SYNTHASE_1"/>
    <property type="match status" value="1"/>
</dbReference>
<dbReference type="PROSITE" id="PS00377">
    <property type="entry name" value="ADOMET_SYNTHASE_2"/>
    <property type="match status" value="1"/>
</dbReference>
<keyword id="KW-0067">ATP-binding</keyword>
<keyword id="KW-0963">Cytoplasm</keyword>
<keyword id="KW-0460">Magnesium</keyword>
<keyword id="KW-0479">Metal-binding</keyword>
<keyword id="KW-0547">Nucleotide-binding</keyword>
<keyword id="KW-0554">One-carbon metabolism</keyword>
<keyword id="KW-0630">Potassium</keyword>
<keyword id="KW-0808">Transferase</keyword>
<accession>A5ILS4</accession>
<feature type="chain" id="PRO_1000007961" description="S-adenosylmethionine synthase">
    <location>
        <begin position="1"/>
        <end position="395"/>
    </location>
</feature>
<feature type="region of interest" description="Flexible loop" evidence="1">
    <location>
        <begin position="98"/>
        <end position="108"/>
    </location>
</feature>
<feature type="binding site" description="in other chain" evidence="1">
    <location>
        <position position="14"/>
    </location>
    <ligand>
        <name>ATP</name>
        <dbReference type="ChEBI" id="CHEBI:30616"/>
        <note>ligand shared between two neighboring subunits</note>
    </ligand>
</feature>
<feature type="binding site" evidence="1">
    <location>
        <position position="16"/>
    </location>
    <ligand>
        <name>Mg(2+)</name>
        <dbReference type="ChEBI" id="CHEBI:18420"/>
    </ligand>
</feature>
<feature type="binding site" evidence="1">
    <location>
        <position position="42"/>
    </location>
    <ligand>
        <name>K(+)</name>
        <dbReference type="ChEBI" id="CHEBI:29103"/>
    </ligand>
</feature>
<feature type="binding site" description="in other chain" evidence="1">
    <location>
        <position position="55"/>
    </location>
    <ligand>
        <name>L-methionine</name>
        <dbReference type="ChEBI" id="CHEBI:57844"/>
        <note>ligand shared between two neighboring subunits</note>
    </ligand>
</feature>
<feature type="binding site" description="in other chain" evidence="1">
    <location>
        <position position="98"/>
    </location>
    <ligand>
        <name>L-methionine</name>
        <dbReference type="ChEBI" id="CHEBI:57844"/>
        <note>ligand shared between two neighboring subunits</note>
    </ligand>
</feature>
<feature type="binding site" description="in other chain" evidence="1">
    <location>
        <begin position="174"/>
        <end position="176"/>
    </location>
    <ligand>
        <name>ATP</name>
        <dbReference type="ChEBI" id="CHEBI:30616"/>
        <note>ligand shared between two neighboring subunits</note>
    </ligand>
</feature>
<feature type="binding site" description="in other chain" evidence="1">
    <location>
        <begin position="240"/>
        <end position="241"/>
    </location>
    <ligand>
        <name>ATP</name>
        <dbReference type="ChEBI" id="CHEBI:30616"/>
        <note>ligand shared between two neighboring subunits</note>
    </ligand>
</feature>
<feature type="binding site" evidence="1">
    <location>
        <position position="249"/>
    </location>
    <ligand>
        <name>ATP</name>
        <dbReference type="ChEBI" id="CHEBI:30616"/>
        <note>ligand shared between two neighboring subunits</note>
    </ligand>
</feature>
<feature type="binding site" evidence="1">
    <location>
        <position position="249"/>
    </location>
    <ligand>
        <name>L-methionine</name>
        <dbReference type="ChEBI" id="CHEBI:57844"/>
        <note>ligand shared between two neighboring subunits</note>
    </ligand>
</feature>
<feature type="binding site" description="in other chain" evidence="1">
    <location>
        <begin position="255"/>
        <end position="256"/>
    </location>
    <ligand>
        <name>ATP</name>
        <dbReference type="ChEBI" id="CHEBI:30616"/>
        <note>ligand shared between two neighboring subunits</note>
    </ligand>
</feature>
<feature type="binding site" evidence="1">
    <location>
        <position position="272"/>
    </location>
    <ligand>
        <name>ATP</name>
        <dbReference type="ChEBI" id="CHEBI:30616"/>
        <note>ligand shared between two neighboring subunits</note>
    </ligand>
</feature>
<feature type="binding site" evidence="1">
    <location>
        <position position="276"/>
    </location>
    <ligand>
        <name>ATP</name>
        <dbReference type="ChEBI" id="CHEBI:30616"/>
        <note>ligand shared between two neighboring subunits</note>
    </ligand>
</feature>
<feature type="binding site" description="in other chain" evidence="1">
    <location>
        <position position="280"/>
    </location>
    <ligand>
        <name>L-methionine</name>
        <dbReference type="ChEBI" id="CHEBI:57844"/>
        <note>ligand shared between two neighboring subunits</note>
    </ligand>
</feature>
<protein>
    <recommendedName>
        <fullName evidence="1">S-adenosylmethionine synthase</fullName>
        <shortName evidence="1">AdoMet synthase</shortName>
        <ecNumber evidence="1">2.5.1.6</ecNumber>
    </recommendedName>
    <alternativeName>
        <fullName evidence="1">MAT</fullName>
    </alternativeName>
    <alternativeName>
        <fullName evidence="1">Methionine adenosyltransferase</fullName>
    </alternativeName>
</protein>
<comment type="function">
    <text evidence="1">Catalyzes the formation of S-adenosylmethionine (AdoMet) from methionine and ATP. The overall synthetic reaction is composed of two sequential steps, AdoMet formation and the subsequent tripolyphosphate hydrolysis which occurs prior to release of AdoMet from the enzyme.</text>
</comment>
<comment type="catalytic activity">
    <reaction evidence="1">
        <text>L-methionine + ATP + H2O = S-adenosyl-L-methionine + phosphate + diphosphate</text>
        <dbReference type="Rhea" id="RHEA:21080"/>
        <dbReference type="ChEBI" id="CHEBI:15377"/>
        <dbReference type="ChEBI" id="CHEBI:30616"/>
        <dbReference type="ChEBI" id="CHEBI:33019"/>
        <dbReference type="ChEBI" id="CHEBI:43474"/>
        <dbReference type="ChEBI" id="CHEBI:57844"/>
        <dbReference type="ChEBI" id="CHEBI:59789"/>
        <dbReference type="EC" id="2.5.1.6"/>
    </reaction>
</comment>
<comment type="cofactor">
    <cofactor evidence="1">
        <name>Mg(2+)</name>
        <dbReference type="ChEBI" id="CHEBI:18420"/>
    </cofactor>
    <text evidence="1">Binds 2 divalent ions per subunit.</text>
</comment>
<comment type="cofactor">
    <cofactor evidence="1">
        <name>K(+)</name>
        <dbReference type="ChEBI" id="CHEBI:29103"/>
    </cofactor>
    <text evidence="1">Binds 1 potassium ion per subunit.</text>
</comment>
<comment type="pathway">
    <text evidence="1">Amino-acid biosynthesis; S-adenosyl-L-methionine biosynthesis; S-adenosyl-L-methionine from L-methionine: step 1/1.</text>
</comment>
<comment type="subunit">
    <text evidence="1">Homotetramer; dimer of dimers.</text>
</comment>
<comment type="subcellular location">
    <subcellularLocation>
        <location evidence="1">Cytoplasm</location>
    </subcellularLocation>
</comment>
<comment type="similarity">
    <text evidence="1">Belongs to the AdoMet synthase family.</text>
</comment>
<sequence length="395" mass="43673">MRRLFTSESVTEGHPDKIADQISDAILDAMLEQDPRSRVAVETLVTTGLVIIAGEVTTRAYVEIPDIARKTILEIGYTRAKYGFDGETCGVLTSIHSQSPDIALGVDKALEVKTGEEVADEFEALGAGDQGIMFGYATNETPEYMPLPITLAHKLAMRLAEVRKNGTLPFLRPDGKTQVTIEYEDDKPVRVDTVLISTQHDPDISQADLREAIIEHVINPVIPEQYRDDKMKILVNPTGRFVLGGPMADTGLTGRKIIVDTYGGWVPHGGGAFSGKDPTKVDRSAHYMARYVAKNVVAAGLADKFLIQLSYAIGVAKPVSIMIDTYGTAKVDEDKLLKVITELFDFRPGAIIKKLNLLRPIYRKTAAYGHFGRNEEEFTWEKLDMVDELKRAFNM</sequence>
<proteinExistence type="inferred from homology"/>